<comment type="function">
    <text evidence="1">Probable adapter protein that may provide a link between cell surface epidermal growth factor receptor and the MAPK/ERK signaling pathway.</text>
</comment>
<comment type="alternative products">
    <event type="alternative splicing"/>
    <isoform>
        <id>Q75VX8-1</id>
        <name>1</name>
        <sequence type="displayed"/>
    </isoform>
    <isoform>
        <id>Q75VX8-2</id>
        <name>2</name>
        <sequence type="described" ref="VSP_034201"/>
    </isoform>
    <isoform>
        <id>Q75VX8-3</id>
        <name>3</name>
        <sequence type="described" ref="VSP_047321 VSP_047322 VSP_034201"/>
    </isoform>
</comment>
<comment type="similarity">
    <text evidence="5">Belongs to the GAREM family.</text>
</comment>
<comment type="sequence caution" evidence="5">
    <conflict type="erroneous initiation">
        <sequence resource="EMBL-CDS" id="BAC03435"/>
    </conflict>
    <text>Extended N-terminus.</text>
</comment>
<comment type="sequence caution" evidence="5">
    <conflict type="erroneous initiation">
        <sequence resource="EMBL-CDS" id="BAC99057"/>
    </conflict>
    <text>Extended N-terminus.</text>
</comment>
<evidence type="ECO:0000250" key="1"/>
<evidence type="ECO:0000256" key="2">
    <source>
        <dbReference type="SAM" id="MobiDB-lite"/>
    </source>
</evidence>
<evidence type="ECO:0000303" key="3">
    <source>
    </source>
</evidence>
<evidence type="ECO:0000303" key="4">
    <source ref="1"/>
</evidence>
<evidence type="ECO:0000305" key="5"/>
<evidence type="ECO:0007744" key="6">
    <source>
    </source>
</evidence>
<protein>
    <recommendedName>
        <fullName>GRB2-associated and regulator of MAPK protein 2</fullName>
    </recommendedName>
    <alternativeName>
        <fullName>GRB2-associated and regulator of MAPK1-like</fullName>
    </alternativeName>
</protein>
<accession>Q75VX8</accession>
<accession>B5MC97</accession>
<accession>B7WNK9</accession>
<accession>Q8NF27</accession>
<accession>Q9UIK8</accession>
<proteinExistence type="evidence at protein level"/>
<dbReference type="EMBL" id="AB124552">
    <property type="protein sequence ID" value="BAC99057.1"/>
    <property type="status" value="ALT_INIT"/>
    <property type="molecule type" value="mRNA"/>
</dbReference>
<dbReference type="EMBL" id="AC011742">
    <property type="status" value="NOT_ANNOTATED_CDS"/>
    <property type="molecule type" value="Genomic_DNA"/>
</dbReference>
<dbReference type="EMBL" id="AK090454">
    <property type="protein sequence ID" value="BAC03435.1"/>
    <property type="status" value="ALT_INIT"/>
    <property type="molecule type" value="mRNA"/>
</dbReference>
<dbReference type="EMBL" id="AB015349">
    <property type="protein sequence ID" value="BAA88120.1"/>
    <property type="molecule type" value="mRNA"/>
</dbReference>
<dbReference type="CCDS" id="CCDS54336.1">
    <molecule id="Q75VX8-1"/>
</dbReference>
<dbReference type="CCDS" id="CCDS54337.1">
    <molecule id="Q75VX8-3"/>
</dbReference>
<dbReference type="RefSeq" id="NP_001161713.1">
    <molecule id="Q75VX8-1"/>
    <property type="nucleotide sequence ID" value="NM_001168241.2"/>
</dbReference>
<dbReference type="RefSeq" id="NP_001177962.1">
    <molecule id="Q75VX8-3"/>
    <property type="nucleotide sequence ID" value="NM_001191033.2"/>
</dbReference>
<dbReference type="RefSeq" id="XP_006712014.1">
    <molecule id="Q75VX8-2"/>
    <property type="nucleotide sequence ID" value="XM_006711951.5"/>
</dbReference>
<dbReference type="SMR" id="Q75VX8"/>
<dbReference type="BioGRID" id="127333">
    <property type="interactions" value="10"/>
</dbReference>
<dbReference type="FunCoup" id="Q75VX8">
    <property type="interactions" value="78"/>
</dbReference>
<dbReference type="IntAct" id="Q75VX8">
    <property type="interactions" value="3"/>
</dbReference>
<dbReference type="STRING" id="9606.ENSP00000384593"/>
<dbReference type="iPTMnet" id="Q75VX8"/>
<dbReference type="PhosphoSitePlus" id="Q75VX8"/>
<dbReference type="BioMuta" id="GAREM2"/>
<dbReference type="DMDM" id="288558847"/>
<dbReference type="jPOST" id="Q75VX8"/>
<dbReference type="MassIVE" id="Q75VX8"/>
<dbReference type="PaxDb" id="9606-ENSP00000384593"/>
<dbReference type="PeptideAtlas" id="Q75VX8"/>
<dbReference type="ProteomicsDB" id="6266"/>
<dbReference type="ProteomicsDB" id="68654">
    <molecule id="Q75VX8-1"/>
</dbReference>
<dbReference type="ProteomicsDB" id="68655">
    <molecule id="Q75VX8-2"/>
</dbReference>
<dbReference type="Antibodypedia" id="57056">
    <property type="antibodies" value="65 antibodies from 19 providers"/>
</dbReference>
<dbReference type="DNASU" id="150946"/>
<dbReference type="Ensembl" id="ENST00000401533.7">
    <molecule id="Q75VX8-1"/>
    <property type="protein sequence ID" value="ENSP00000384593.1"/>
    <property type="gene ID" value="ENSG00000157833.13"/>
</dbReference>
<dbReference type="Ensembl" id="ENST00000407684.1">
    <molecule id="Q75VX8-3"/>
    <property type="protein sequence ID" value="ENSP00000384581.1"/>
    <property type="gene ID" value="ENSG00000157833.13"/>
</dbReference>
<dbReference type="GeneID" id="150946"/>
<dbReference type="KEGG" id="hsa:150946"/>
<dbReference type="MANE-Select" id="ENST00000401533.7">
    <property type="protein sequence ID" value="ENSP00000384593.1"/>
    <property type="RefSeq nucleotide sequence ID" value="NM_001168241.2"/>
    <property type="RefSeq protein sequence ID" value="NP_001161713.1"/>
</dbReference>
<dbReference type="UCSC" id="uc002rgw.2">
    <molecule id="Q75VX8-1"/>
    <property type="organism name" value="human"/>
</dbReference>
<dbReference type="AGR" id="HGNC:27172"/>
<dbReference type="CTD" id="150946"/>
<dbReference type="DisGeNET" id="150946"/>
<dbReference type="GeneCards" id="GAREM2"/>
<dbReference type="HGNC" id="HGNC:27172">
    <property type="gene designation" value="GAREM2"/>
</dbReference>
<dbReference type="HPA" id="ENSG00000157833">
    <property type="expression patterns" value="Group enriched (brain, parathyroid gland)"/>
</dbReference>
<dbReference type="MalaCards" id="GAREM2"/>
<dbReference type="MIM" id="617999">
    <property type="type" value="gene"/>
</dbReference>
<dbReference type="neXtProt" id="NX_Q75VX8"/>
<dbReference type="OpenTargets" id="ENSG00000157833"/>
<dbReference type="PharmGKB" id="PA142671865"/>
<dbReference type="VEuPathDB" id="HostDB:ENSG00000157833"/>
<dbReference type="eggNOG" id="ENOG502QQU8">
    <property type="taxonomic scope" value="Eukaryota"/>
</dbReference>
<dbReference type="GeneTree" id="ENSGT00530000063834"/>
<dbReference type="HOGENOM" id="CLU_014784_0_0_1"/>
<dbReference type="InParanoid" id="Q75VX8"/>
<dbReference type="OMA" id="CLPACAR"/>
<dbReference type="OrthoDB" id="6077228at2759"/>
<dbReference type="PAN-GO" id="Q75VX8">
    <property type="GO annotations" value="0 GO annotations based on evolutionary models"/>
</dbReference>
<dbReference type="PhylomeDB" id="Q75VX8"/>
<dbReference type="TreeFam" id="TF329726"/>
<dbReference type="PathwayCommons" id="Q75VX8"/>
<dbReference type="SignaLink" id="Q75VX8"/>
<dbReference type="BioGRID-ORCS" id="150946">
    <property type="hits" value="18 hits in 1149 CRISPR screens"/>
</dbReference>
<dbReference type="ChiTaRS" id="GAREM2">
    <property type="organism name" value="human"/>
</dbReference>
<dbReference type="GenomeRNAi" id="150946"/>
<dbReference type="Pharos" id="Q75VX8">
    <property type="development level" value="Tdark"/>
</dbReference>
<dbReference type="PRO" id="PR:Q75VX8"/>
<dbReference type="Proteomes" id="UP000005640">
    <property type="component" value="Chromosome 2"/>
</dbReference>
<dbReference type="RNAct" id="Q75VX8">
    <property type="molecule type" value="protein"/>
</dbReference>
<dbReference type="Bgee" id="ENSG00000157833">
    <property type="expression patterns" value="Expressed in ventricular zone and 127 other cell types or tissues"/>
</dbReference>
<dbReference type="GO" id="GO:0050890">
    <property type="term" value="P:cognition"/>
    <property type="evidence" value="ECO:0007669"/>
    <property type="project" value="Ensembl"/>
</dbReference>
<dbReference type="GO" id="GO:1990138">
    <property type="term" value="P:neuron projection extension"/>
    <property type="evidence" value="ECO:0007669"/>
    <property type="project" value="Ensembl"/>
</dbReference>
<dbReference type="GO" id="GO:0006950">
    <property type="term" value="P:response to stress"/>
    <property type="evidence" value="ECO:0007669"/>
    <property type="project" value="Ensembl"/>
</dbReference>
<dbReference type="GO" id="GO:0035176">
    <property type="term" value="P:social behavior"/>
    <property type="evidence" value="ECO:0007669"/>
    <property type="project" value="Ensembl"/>
</dbReference>
<dbReference type="CDD" id="cd09525">
    <property type="entry name" value="SAM_GAREM"/>
    <property type="match status" value="1"/>
</dbReference>
<dbReference type="Gene3D" id="1.10.150.50">
    <property type="entry name" value="Transcription Factor, Ets-1"/>
    <property type="match status" value="1"/>
</dbReference>
<dbReference type="InterPro" id="IPR025946">
    <property type="entry name" value="CABIT_dom"/>
</dbReference>
<dbReference type="InterPro" id="IPR052281">
    <property type="entry name" value="GAREM"/>
</dbReference>
<dbReference type="InterPro" id="IPR013761">
    <property type="entry name" value="SAM/pointed_sf"/>
</dbReference>
<dbReference type="PANTHER" id="PTHR14454:SF5">
    <property type="entry name" value="GRB2-ASSOCIATED AND REGULATOR OF MAPK PROTEIN 2"/>
    <property type="match status" value="1"/>
</dbReference>
<dbReference type="PANTHER" id="PTHR14454">
    <property type="entry name" value="GRB2-ASSOCIATED AND REGULATOR OF MAPK PROTEIN FAMILY MEMBER"/>
    <property type="match status" value="1"/>
</dbReference>
<dbReference type="Pfam" id="PF12736">
    <property type="entry name" value="CABIT"/>
    <property type="match status" value="1"/>
</dbReference>
<dbReference type="SUPFAM" id="SSF47769">
    <property type="entry name" value="SAM/Pointed domain"/>
    <property type="match status" value="1"/>
</dbReference>
<sequence length="874" mass="92882">MEKLAAGLAGLRWSMGAFPLDLIVSRCRLPTLACLGPGEYAEGVSERDILLIHSCRQWTTVTAHTLEEGHYVIGPKIDIPLQYPGKFKLLEQARDVREPVRYFSSVEEVASVFPDRIFVMEAITFSVKVVSGEFSEDSEVYNFTLHAGDELTLMGQAEILCAKTTKERSRFTTLLRKLGRAGALAGVGGGGPASAGAAGGTGGGGARPVKGKMPCLICMNHRTNESLSLPFQCQGRFSTRSPLELQMQEGEHTVRAIIERVRLPVNVLVPSRPPRNPYDLHPVREGHCYKLVSIISKTVVLGLALRREGPAPLHFLLLTDTPRFALPQGLLAGDPRVERLVRDSASYCRERFDPDEYSTAVREAPAELAEDCASPRRARLCLPAPRAPGLARAPGPLAPAPAGEGDQEYVSPDWAAAPEPAAPPAEIPYEELWAHQGPEGLVRPPPGLDLISFGAAGPPRREPEAPPPPVPPKSEAVKEECRLLNAPPVPPRGGNGSGRLSSSPPVPPRFPKLQPVHSPSSSLSYYSSGLQDGAGSRSGSGSPSPDTYSLYCYPCTWGDCKVGESSSRPAPGPLPSTTQPSQASRALTEPLSGRAASLLGADTPVKTYHSCPPLFKPSHPQKRFAPFGALNPFSGPAYPSGPSAALSSGPRTTSGPVATSGPAYSPGPASPGQAYSAAPPSSCAPSSSSSSEWQEPVLEPFDPFELGQGSSPEPELLRSQEPRAVGTPGPGPRLSPLGPSKAFEPEGLVLHQVPTPLSPAALQGPEAGGALFLTQGRLEGPPASPRDGATGFGVRDASSWQPPADLSALSLEEVSRSLRFIGLSEDVVSFFARERIDGSIFVQLSEDILADDFHLTKLQVKKIMQFIKGWRPKI</sequence>
<reference key="1">
    <citation type="submission" date="2002-07" db="EMBL/GenBank/DDBJ databases">
        <title>The nucleotide sequence of a long cDNA clone isolated from human spleen.</title>
        <authorList>
            <person name="Jikuya H."/>
            <person name="Takano J."/>
            <person name="Kikuno R."/>
            <person name="Nagase T."/>
            <person name="Ohara O."/>
        </authorList>
    </citation>
    <scope>NUCLEOTIDE SEQUENCE [LARGE SCALE MRNA] (ISOFORM 3)</scope>
    <scope>NUCLEOTIDE SEQUENCE [LARGE SCALE MRNA] OF 34-874 (ISOFORM 2)</scope>
    <source>
        <tissue>Spleen</tissue>
    </source>
</reference>
<reference key="2">
    <citation type="submission" date="2002-11" db="EMBL/GenBank/DDBJ databases">
        <title>The nucleotide sequence of a long cDNA clone isolated from human.</title>
        <authorList>
            <person name="Nagase T."/>
            <person name="Kikuno R."/>
            <person name="Ohara O."/>
        </authorList>
    </citation>
    <scope>NUCLEOTIDE SEQUENCE [LARGE SCALE MRNA] (ISOFORM 1)</scope>
    <source>
        <tissue>Brain</tissue>
    </source>
</reference>
<reference key="3">
    <citation type="journal article" date="2005" name="Nature">
        <title>Generation and annotation of the DNA sequences of human chromosomes 2 and 4.</title>
        <authorList>
            <person name="Hillier L.W."/>
            <person name="Graves T.A."/>
            <person name="Fulton R.S."/>
            <person name="Fulton L.A."/>
            <person name="Pepin K.H."/>
            <person name="Minx P."/>
            <person name="Wagner-McPherson C."/>
            <person name="Layman D."/>
            <person name="Wylie K."/>
            <person name="Sekhon M."/>
            <person name="Becker M.C."/>
            <person name="Fewell G.A."/>
            <person name="Delehaunty K.D."/>
            <person name="Miner T.L."/>
            <person name="Nash W.E."/>
            <person name="Kremitzki C."/>
            <person name="Oddy L."/>
            <person name="Du H."/>
            <person name="Sun H."/>
            <person name="Bradshaw-Cordum H."/>
            <person name="Ali J."/>
            <person name="Carter J."/>
            <person name="Cordes M."/>
            <person name="Harris A."/>
            <person name="Isak A."/>
            <person name="van Brunt A."/>
            <person name="Nguyen C."/>
            <person name="Du F."/>
            <person name="Courtney L."/>
            <person name="Kalicki J."/>
            <person name="Ozersky P."/>
            <person name="Abbott S."/>
            <person name="Armstrong J."/>
            <person name="Belter E.A."/>
            <person name="Caruso L."/>
            <person name="Cedroni M."/>
            <person name="Cotton M."/>
            <person name="Davidson T."/>
            <person name="Desai A."/>
            <person name="Elliott G."/>
            <person name="Erb T."/>
            <person name="Fronick C."/>
            <person name="Gaige T."/>
            <person name="Haakenson W."/>
            <person name="Haglund K."/>
            <person name="Holmes A."/>
            <person name="Harkins R."/>
            <person name="Kim K."/>
            <person name="Kruchowski S.S."/>
            <person name="Strong C.M."/>
            <person name="Grewal N."/>
            <person name="Goyea E."/>
            <person name="Hou S."/>
            <person name="Levy A."/>
            <person name="Martinka S."/>
            <person name="Mead K."/>
            <person name="McLellan M.D."/>
            <person name="Meyer R."/>
            <person name="Randall-Maher J."/>
            <person name="Tomlinson C."/>
            <person name="Dauphin-Kohlberg S."/>
            <person name="Kozlowicz-Reilly A."/>
            <person name="Shah N."/>
            <person name="Swearengen-Shahid S."/>
            <person name="Snider J."/>
            <person name="Strong J.T."/>
            <person name="Thompson J."/>
            <person name="Yoakum M."/>
            <person name="Leonard S."/>
            <person name="Pearman C."/>
            <person name="Trani L."/>
            <person name="Radionenko M."/>
            <person name="Waligorski J.E."/>
            <person name="Wang C."/>
            <person name="Rock S.M."/>
            <person name="Tin-Wollam A.-M."/>
            <person name="Maupin R."/>
            <person name="Latreille P."/>
            <person name="Wendl M.C."/>
            <person name="Yang S.-P."/>
            <person name="Pohl C."/>
            <person name="Wallis J.W."/>
            <person name="Spieth J."/>
            <person name="Bieri T.A."/>
            <person name="Berkowicz N."/>
            <person name="Nelson J.O."/>
            <person name="Osborne J."/>
            <person name="Ding L."/>
            <person name="Meyer R."/>
            <person name="Sabo A."/>
            <person name="Shotland Y."/>
            <person name="Sinha P."/>
            <person name="Wohldmann P.E."/>
            <person name="Cook L.L."/>
            <person name="Hickenbotham M.T."/>
            <person name="Eldred J."/>
            <person name="Williams D."/>
            <person name="Jones T.A."/>
            <person name="She X."/>
            <person name="Ciccarelli F.D."/>
            <person name="Izaurralde E."/>
            <person name="Taylor J."/>
            <person name="Schmutz J."/>
            <person name="Myers R.M."/>
            <person name="Cox D.R."/>
            <person name="Huang X."/>
            <person name="McPherson J.D."/>
            <person name="Mardis E.R."/>
            <person name="Clifton S.W."/>
            <person name="Warren W.C."/>
            <person name="Chinwalla A.T."/>
            <person name="Eddy S.R."/>
            <person name="Marra M.A."/>
            <person name="Ovcharenko I."/>
            <person name="Furey T.S."/>
            <person name="Miller W."/>
            <person name="Eichler E.E."/>
            <person name="Bork P."/>
            <person name="Suyama M."/>
            <person name="Torrents D."/>
            <person name="Waterston R.H."/>
            <person name="Wilson R.K."/>
        </authorList>
    </citation>
    <scope>NUCLEOTIDE SEQUENCE [LARGE SCALE GENOMIC DNA]</scope>
</reference>
<reference key="4">
    <citation type="journal article" date="1998" name="Nat. Biotechnol.">
        <title>Selection system for genes encoding nuclear-targeted proteins.</title>
        <authorList>
            <person name="Ueki N."/>
            <person name="Oda T."/>
            <person name="Kondo M."/>
            <person name="Yano K."/>
            <person name="Noguchi T."/>
            <person name="Muramatsu M.-A."/>
        </authorList>
    </citation>
    <scope>NUCLEOTIDE SEQUENCE [LARGE SCALE MRNA] OF 473-874 (ISOFORM 2)</scope>
    <source>
        <tissue>Fetal brain</tissue>
    </source>
</reference>
<reference key="5">
    <citation type="journal article" date="2013" name="J. Proteome Res.">
        <title>Toward a comprehensive characterization of a human cancer cell phosphoproteome.</title>
        <authorList>
            <person name="Zhou H."/>
            <person name="Di Palma S."/>
            <person name="Preisinger C."/>
            <person name="Peng M."/>
            <person name="Polat A.N."/>
            <person name="Heck A.J."/>
            <person name="Mohammed S."/>
        </authorList>
    </citation>
    <scope>PHOSPHORYLATION [LARGE SCALE ANALYSIS] AT SER-735</scope>
    <scope>IDENTIFICATION BY MASS SPECTROMETRY [LARGE SCALE ANALYSIS]</scope>
    <source>
        <tissue>Erythroleukemia</tissue>
    </source>
</reference>
<gene>
    <name type="primary">GAREM2</name>
    <name type="synonym">FAM59B</name>
    <name type="synonym">GAREML</name>
    <name type="synonym">KIAA2038</name>
    <name type="ORF">HRIHFB2063</name>
</gene>
<keyword id="KW-0025">Alternative splicing</keyword>
<keyword id="KW-0597">Phosphoprotein</keyword>
<keyword id="KW-1267">Proteomics identification</keyword>
<keyword id="KW-1185">Reference proteome</keyword>
<name>GARE2_HUMAN</name>
<feature type="chain" id="PRO_0000340253" description="GRB2-associated and regulator of MAPK protein 2">
    <location>
        <begin position="1"/>
        <end position="874"/>
    </location>
</feature>
<feature type="domain" description="SAM">
    <location>
        <begin position="807"/>
        <end position="871"/>
    </location>
</feature>
<feature type="region of interest" description="CABIT">
    <location>
        <begin position="12"/>
        <end position="339"/>
    </location>
</feature>
<feature type="region of interest" description="Disordered" evidence="2">
    <location>
        <begin position="188"/>
        <end position="207"/>
    </location>
</feature>
<feature type="region of interest" description="Disordered" evidence="2">
    <location>
        <begin position="388"/>
        <end position="422"/>
    </location>
</feature>
<feature type="region of interest" description="Disordered" evidence="2">
    <location>
        <begin position="437"/>
        <end position="545"/>
    </location>
</feature>
<feature type="region of interest" description="Disordered" evidence="2">
    <location>
        <begin position="563"/>
        <end position="598"/>
    </location>
</feature>
<feature type="region of interest" description="Disordered" evidence="2">
    <location>
        <begin position="625"/>
        <end position="742"/>
    </location>
</feature>
<feature type="compositionally biased region" description="Gly residues" evidence="2">
    <location>
        <begin position="188"/>
        <end position="206"/>
    </location>
</feature>
<feature type="compositionally biased region" description="Low complexity" evidence="2">
    <location>
        <begin position="388"/>
        <end position="403"/>
    </location>
</feature>
<feature type="compositionally biased region" description="Low complexity" evidence="2">
    <location>
        <begin position="518"/>
        <end position="545"/>
    </location>
</feature>
<feature type="compositionally biased region" description="Polar residues" evidence="2">
    <location>
        <begin position="575"/>
        <end position="585"/>
    </location>
</feature>
<feature type="compositionally biased region" description="Low complexity" evidence="2">
    <location>
        <begin position="632"/>
        <end position="650"/>
    </location>
</feature>
<feature type="compositionally biased region" description="Low complexity" evidence="2">
    <location>
        <begin position="658"/>
        <end position="691"/>
    </location>
</feature>
<feature type="modified residue" description="Phosphoserine" evidence="6">
    <location>
        <position position="735"/>
    </location>
</feature>
<feature type="splice variant" id="VSP_047321" description="In isoform 3." evidence="4">
    <location>
        <begin position="1"/>
        <end position="77"/>
    </location>
</feature>
<feature type="splice variant" id="VSP_047322" description="In isoform 3." evidence="4">
    <original>DIPLQY</original>
    <variation>MHRMPD</variation>
    <location>
        <begin position="78"/>
        <end position="83"/>
    </location>
</feature>
<feature type="splice variant" id="VSP_034201" description="In isoform 2 and isoform 3." evidence="3 4">
    <location>
        <begin position="562"/>
        <end position="694"/>
    </location>
</feature>
<feature type="sequence conflict" description="In Ref. 1; BAC03435." evidence="5" ref="1">
    <original>Q</original>
    <variation>R</variation>
    <location>
        <position position="407"/>
    </location>
</feature>
<feature type="sequence conflict" description="In Ref. 4; BAA88120." evidence="5" ref="4">
    <original>KSE</original>
    <variation>DAW</variation>
    <location>
        <begin position="473"/>
        <end position="475"/>
    </location>
</feature>
<feature type="sequence conflict" description="In Ref. 1; BAC03435." evidence="5" ref="1">
    <original>R</original>
    <variation>P</variation>
    <location>
        <position position="733"/>
    </location>
</feature>
<feature type="sequence conflict" description="In Ref. 1; BAC03435." evidence="5" ref="1">
    <original>R</original>
    <variation>G</variation>
    <location>
        <position position="819"/>
    </location>
</feature>
<feature type="sequence conflict" description="In Ref. 1; BAC03435." evidence="5" ref="1">
    <original>M</original>
    <variation>I</variation>
    <location>
        <position position="864"/>
    </location>
</feature>
<organism>
    <name type="scientific">Homo sapiens</name>
    <name type="common">Human</name>
    <dbReference type="NCBI Taxonomy" id="9606"/>
    <lineage>
        <taxon>Eukaryota</taxon>
        <taxon>Metazoa</taxon>
        <taxon>Chordata</taxon>
        <taxon>Craniata</taxon>
        <taxon>Vertebrata</taxon>
        <taxon>Euteleostomi</taxon>
        <taxon>Mammalia</taxon>
        <taxon>Eutheria</taxon>
        <taxon>Euarchontoglires</taxon>
        <taxon>Primates</taxon>
        <taxon>Haplorrhini</taxon>
        <taxon>Catarrhini</taxon>
        <taxon>Hominidae</taxon>
        <taxon>Homo</taxon>
    </lineage>
</organism>